<name>LPLT_ECO55</name>
<keyword id="KW-0997">Cell inner membrane</keyword>
<keyword id="KW-1003">Cell membrane</keyword>
<keyword id="KW-0445">Lipid transport</keyword>
<keyword id="KW-0472">Membrane</keyword>
<keyword id="KW-1185">Reference proteome</keyword>
<keyword id="KW-0812">Transmembrane</keyword>
<keyword id="KW-1133">Transmembrane helix</keyword>
<keyword id="KW-0813">Transport</keyword>
<feature type="chain" id="PRO_1000185671" description="Lysophospholipid transporter LplT">
    <location>
        <begin position="1"/>
        <end position="397"/>
    </location>
</feature>
<feature type="topological domain" description="Periplasmic" evidence="1">
    <location>
        <begin position="1"/>
        <end position="17"/>
    </location>
</feature>
<feature type="transmembrane region" description="Helical" evidence="1">
    <location>
        <begin position="18"/>
        <end position="38"/>
    </location>
</feature>
<feature type="topological domain" description="Cytoplasmic" evidence="1">
    <location>
        <begin position="39"/>
        <end position="52"/>
    </location>
</feature>
<feature type="transmembrane region" description="Helical" evidence="1">
    <location>
        <begin position="53"/>
        <end position="73"/>
    </location>
</feature>
<feature type="topological domain" description="Periplasmic" evidence="1">
    <location>
        <begin position="74"/>
        <end position="90"/>
    </location>
</feature>
<feature type="transmembrane region" description="Helical" evidence="1">
    <location>
        <begin position="91"/>
        <end position="111"/>
    </location>
</feature>
<feature type="topological domain" description="Cytoplasmic" evidence="1">
    <location>
        <begin position="112"/>
        <end position="144"/>
    </location>
</feature>
<feature type="transmembrane region" description="Helical" evidence="1">
    <location>
        <begin position="145"/>
        <end position="165"/>
    </location>
</feature>
<feature type="topological domain" description="Periplasmic" evidence="1">
    <location>
        <position position="166"/>
    </location>
</feature>
<feature type="transmembrane region" description="Helical" evidence="1">
    <location>
        <begin position="167"/>
        <end position="187"/>
    </location>
</feature>
<feature type="topological domain" description="Cytoplasmic" evidence="1">
    <location>
        <begin position="188"/>
        <end position="226"/>
    </location>
</feature>
<feature type="transmembrane region" description="Helical" evidence="1">
    <location>
        <begin position="227"/>
        <end position="247"/>
    </location>
</feature>
<feature type="topological domain" description="Periplasmic" evidence="1">
    <location>
        <begin position="248"/>
        <end position="256"/>
    </location>
</feature>
<feature type="transmembrane region" description="Helical" evidence="1">
    <location>
        <begin position="257"/>
        <end position="277"/>
    </location>
</feature>
<feature type="topological domain" description="Cytoplasmic" evidence="1">
    <location>
        <begin position="278"/>
        <end position="280"/>
    </location>
</feature>
<feature type="transmembrane region" description="Helical" evidence="1">
    <location>
        <begin position="281"/>
        <end position="301"/>
    </location>
</feature>
<feature type="topological domain" description="Periplasmic" evidence="1">
    <location>
        <begin position="302"/>
        <end position="304"/>
    </location>
</feature>
<feature type="transmembrane region" description="Helical" evidence="1">
    <location>
        <begin position="305"/>
        <end position="325"/>
    </location>
</feature>
<feature type="topological domain" description="Cytoplasmic" evidence="1">
    <location>
        <begin position="326"/>
        <end position="343"/>
    </location>
</feature>
<feature type="transmembrane region" description="Helical" evidence="1">
    <location>
        <begin position="344"/>
        <end position="364"/>
    </location>
</feature>
<feature type="topological domain" description="Periplasmic" evidence="1">
    <location>
        <begin position="365"/>
        <end position="366"/>
    </location>
</feature>
<feature type="transmembrane region" description="Helical" evidence="1">
    <location>
        <begin position="367"/>
        <end position="387"/>
    </location>
</feature>
<feature type="topological domain" description="Cytoplasmic" evidence="1">
    <location>
        <begin position="388"/>
        <end position="397"/>
    </location>
</feature>
<proteinExistence type="inferred from homology"/>
<protein>
    <recommendedName>
        <fullName evidence="1">Lysophospholipid transporter LplT</fullName>
    </recommendedName>
</protein>
<sequence length="397" mass="41656">MSESVHTNTSLWSKGMKAVIVAQFLSAFGDNALLFATLALLKAQFYPEWSQPILQMVFVGAYILFAPFVGQVADSFAKGRVMMFANGLKLLGAASICFGINPFLGYTLVGVGAAAYSPAKYGILGELTTGSKLVKANGLMEASTIAAILLGSVAGGVLADWHVLVALAACALAYGGAVVANIYIPKLAAARPGQSWNLINMTRSFLNACTSLWRNGETRFSLVGTSLFWGAGVTLRFLLVLWVPVALGITDNATPTYLNAMVAIGIVVGAGAAAKLVTLETVSRCMPAGILIGVVVLIFSLQHELLPAYALLMLIGVMGGFFVVPLNALLQERGKKSVGAGNAIAVQNLGENSAMLLMLGIYSLAVMIGIPVVPIGIGFGALFALAITALWIWQRRH</sequence>
<evidence type="ECO:0000255" key="1">
    <source>
        <dbReference type="HAMAP-Rule" id="MF_01585"/>
    </source>
</evidence>
<gene>
    <name evidence="1" type="primary">lplT</name>
    <name type="ordered locus">EC55989_3111</name>
</gene>
<accession>B7LF12</accession>
<organism>
    <name type="scientific">Escherichia coli (strain 55989 / EAEC)</name>
    <dbReference type="NCBI Taxonomy" id="585055"/>
    <lineage>
        <taxon>Bacteria</taxon>
        <taxon>Pseudomonadati</taxon>
        <taxon>Pseudomonadota</taxon>
        <taxon>Gammaproteobacteria</taxon>
        <taxon>Enterobacterales</taxon>
        <taxon>Enterobacteriaceae</taxon>
        <taxon>Escherichia</taxon>
    </lineage>
</organism>
<comment type="function">
    <text evidence="1">Catalyzes the facilitated diffusion of 2-acyl-glycero-3-phosphoethanolamine (2-acyl-GPE) into the cell.</text>
</comment>
<comment type="subcellular location">
    <subcellularLocation>
        <location evidence="1">Cell inner membrane</location>
        <topology evidence="1">Multi-pass membrane protein</topology>
    </subcellularLocation>
</comment>
<comment type="similarity">
    <text evidence="1">Belongs to the major facilitator superfamily. LplT (TC 2.A.1.42) family.</text>
</comment>
<dbReference type="EMBL" id="CU928145">
    <property type="protein sequence ID" value="CAU99027.1"/>
    <property type="molecule type" value="Genomic_DNA"/>
</dbReference>
<dbReference type="RefSeq" id="WP_000004616.1">
    <property type="nucleotide sequence ID" value="NC_011748.1"/>
</dbReference>
<dbReference type="SMR" id="B7LF12"/>
<dbReference type="KEGG" id="eck:EC55989_3111"/>
<dbReference type="HOGENOM" id="CLU_047399_0_0_6"/>
<dbReference type="Proteomes" id="UP000000746">
    <property type="component" value="Chromosome"/>
</dbReference>
<dbReference type="GO" id="GO:0005886">
    <property type="term" value="C:plasma membrane"/>
    <property type="evidence" value="ECO:0007669"/>
    <property type="project" value="UniProtKB-SubCell"/>
</dbReference>
<dbReference type="GO" id="GO:0051978">
    <property type="term" value="F:lysophospholipid:sodium symporter activity"/>
    <property type="evidence" value="ECO:0007669"/>
    <property type="project" value="InterPro"/>
</dbReference>
<dbReference type="CDD" id="cd06173">
    <property type="entry name" value="MFS_MefA_like"/>
    <property type="match status" value="1"/>
</dbReference>
<dbReference type="FunFam" id="1.20.1250.20:FF:000091">
    <property type="entry name" value="Lysophospholipid transporter LplT"/>
    <property type="match status" value="1"/>
</dbReference>
<dbReference type="Gene3D" id="1.20.1250.20">
    <property type="entry name" value="MFS general substrate transporter like domains"/>
    <property type="match status" value="1"/>
</dbReference>
<dbReference type="HAMAP" id="MF_01585">
    <property type="entry name" value="MFS_LplT"/>
    <property type="match status" value="1"/>
</dbReference>
<dbReference type="InterPro" id="IPR023727">
    <property type="entry name" value="LysoPLipid__transptr_LplT"/>
</dbReference>
<dbReference type="InterPro" id="IPR011701">
    <property type="entry name" value="MFS"/>
</dbReference>
<dbReference type="InterPro" id="IPR036259">
    <property type="entry name" value="MFS_trans_sf"/>
</dbReference>
<dbReference type="NCBIfam" id="NF008397">
    <property type="entry name" value="PRK11195.1"/>
    <property type="match status" value="1"/>
</dbReference>
<dbReference type="PANTHER" id="PTHR43266">
    <property type="entry name" value="MACROLIDE-EFFLUX PROTEIN"/>
    <property type="match status" value="1"/>
</dbReference>
<dbReference type="PANTHER" id="PTHR43266:SF2">
    <property type="entry name" value="MAJOR FACILITATOR SUPERFAMILY (MFS) PROFILE DOMAIN-CONTAINING PROTEIN"/>
    <property type="match status" value="1"/>
</dbReference>
<dbReference type="Pfam" id="PF07690">
    <property type="entry name" value="MFS_1"/>
    <property type="match status" value="1"/>
</dbReference>
<dbReference type="SUPFAM" id="SSF103473">
    <property type="entry name" value="MFS general substrate transporter"/>
    <property type="match status" value="1"/>
</dbReference>
<reference key="1">
    <citation type="journal article" date="2009" name="PLoS Genet.">
        <title>Organised genome dynamics in the Escherichia coli species results in highly diverse adaptive paths.</title>
        <authorList>
            <person name="Touchon M."/>
            <person name="Hoede C."/>
            <person name="Tenaillon O."/>
            <person name="Barbe V."/>
            <person name="Baeriswyl S."/>
            <person name="Bidet P."/>
            <person name="Bingen E."/>
            <person name="Bonacorsi S."/>
            <person name="Bouchier C."/>
            <person name="Bouvet O."/>
            <person name="Calteau A."/>
            <person name="Chiapello H."/>
            <person name="Clermont O."/>
            <person name="Cruveiller S."/>
            <person name="Danchin A."/>
            <person name="Diard M."/>
            <person name="Dossat C."/>
            <person name="Karoui M.E."/>
            <person name="Frapy E."/>
            <person name="Garry L."/>
            <person name="Ghigo J.M."/>
            <person name="Gilles A.M."/>
            <person name="Johnson J."/>
            <person name="Le Bouguenec C."/>
            <person name="Lescat M."/>
            <person name="Mangenot S."/>
            <person name="Martinez-Jehanne V."/>
            <person name="Matic I."/>
            <person name="Nassif X."/>
            <person name="Oztas S."/>
            <person name="Petit M.A."/>
            <person name="Pichon C."/>
            <person name="Rouy Z."/>
            <person name="Ruf C.S."/>
            <person name="Schneider D."/>
            <person name="Tourret J."/>
            <person name="Vacherie B."/>
            <person name="Vallenet D."/>
            <person name="Medigue C."/>
            <person name="Rocha E.P.C."/>
            <person name="Denamur E."/>
        </authorList>
    </citation>
    <scope>NUCLEOTIDE SEQUENCE [LARGE SCALE GENOMIC DNA]</scope>
    <source>
        <strain>55989 / EAEC</strain>
    </source>
</reference>